<gene>
    <name type="primary">zfx</name>
</gene>
<feature type="chain" id="PRO_0000159178" description="Zinc-containing ferredoxin A">
    <location>
        <begin position="1"/>
        <end position="54" status="greater than"/>
    </location>
</feature>
<feature type="domain" description="4Fe-4S ferredoxin-type 1" evidence="1">
    <location>
        <begin position="35"/>
        <end position="54" status="greater than"/>
    </location>
</feature>
<feature type="region of interest" description="N-terminal extension">
    <location>
        <begin position="1"/>
        <end position="36"/>
    </location>
</feature>
<feature type="region of interest" description="Disordered" evidence="2">
    <location>
        <begin position="1"/>
        <end position="21"/>
    </location>
</feature>
<feature type="compositionally biased region" description="Basic and acidic residues" evidence="2">
    <location>
        <begin position="9"/>
        <end position="20"/>
    </location>
</feature>
<feature type="binding site">
    <location>
        <position position="16"/>
    </location>
    <ligand>
        <name>Zn(2+)</name>
        <dbReference type="ChEBI" id="CHEBI:29105"/>
    </ligand>
</feature>
<feature type="binding site">
    <location>
        <position position="19"/>
    </location>
    <ligand>
        <name>Zn(2+)</name>
        <dbReference type="ChEBI" id="CHEBI:29105"/>
    </ligand>
</feature>
<feature type="binding site">
    <location>
        <position position="34"/>
    </location>
    <ligand>
        <name>Zn(2+)</name>
        <dbReference type="ChEBI" id="CHEBI:29105"/>
    </ligand>
</feature>
<feature type="binding site">
    <location>
        <position position="45"/>
    </location>
    <ligand>
        <name>[3Fe-4S] cluster</name>
        <dbReference type="ChEBI" id="CHEBI:21137"/>
    </ligand>
</feature>
<feature type="binding site">
    <location>
        <position position="51"/>
    </location>
    <ligand>
        <name>[3Fe-4S] cluster</name>
        <dbReference type="ChEBI" id="CHEBI:21137"/>
    </ligand>
</feature>
<feature type="modified residue" description="N6-methyllysine" evidence="3">
    <location>
        <position position="29"/>
    </location>
</feature>
<feature type="non-terminal residue">
    <location>
        <position position="54"/>
    </location>
</feature>
<keyword id="KW-0003">3Fe-4S</keyword>
<keyword id="KW-0004">4Fe-4S</keyword>
<keyword id="KW-0903">Direct protein sequencing</keyword>
<keyword id="KW-0249">Electron transport</keyword>
<keyword id="KW-0408">Iron</keyword>
<keyword id="KW-0411">Iron-sulfur</keyword>
<keyword id="KW-0479">Metal-binding</keyword>
<keyword id="KW-0488">Methylation</keyword>
<keyword id="KW-0677">Repeat</keyword>
<keyword id="KW-0813">Transport</keyword>
<keyword id="KW-0862">Zinc</keyword>
<reference key="1">
    <citation type="journal article" date="1998" name="J. Biol. Inorg. Chem.">
        <title>Di-cluster, seven iron ferredoxins from hyperthermophilic Sulfolobales.</title>
        <authorList>
            <person name="Gomes C.M."/>
            <person name="Faria A."/>
            <person name="Carita J."/>
            <person name="Mendes J.C."/>
            <person name="Regalla M."/>
            <person name="Chicau P."/>
            <person name="Huber H."/>
            <person name="Stetter K.O."/>
            <person name="Teixeira M."/>
        </authorList>
    </citation>
    <scope>PROTEIN SEQUENCE</scope>
    <scope>METHYLATION AT LYS-29</scope>
</reference>
<evidence type="ECO:0000250" key="1"/>
<evidence type="ECO:0000256" key="2">
    <source>
        <dbReference type="SAM" id="MobiDB-lite"/>
    </source>
</evidence>
<evidence type="ECO:0000269" key="3">
    <source ref="1"/>
</evidence>
<protein>
    <recommendedName>
        <fullName>Zinc-containing ferredoxin A</fullName>
        <shortName>FDA</shortName>
    </recommendedName>
    <alternativeName>
        <fullName>Seven-iron ferredoxin</fullName>
    </alternativeName>
</protein>
<accession>P81543</accession>
<name>FERA_SULME</name>
<comment type="function">
    <text>Ferredoxins are iron-sulfur proteins that transfer electrons in a wide variety of metabolic reactions.</text>
</comment>
<comment type="cofactor">
    <cofactor>
        <name>[3Fe-4S] cluster</name>
        <dbReference type="ChEBI" id="CHEBI:21137"/>
    </cofactor>
    <text>Binds 1 [3Fe-4S] cluster.</text>
</comment>
<comment type="cofactor">
    <cofactor>
        <name>[4Fe-4S] cluster</name>
        <dbReference type="ChEBI" id="CHEBI:49883"/>
    </cofactor>
    <text>Binds 1 [4Fe-4S] cluster.</text>
</comment>
<comment type="cofactor">
    <cofactor>
        <name>Zn(2+)</name>
        <dbReference type="ChEBI" id="CHEBI:29105"/>
    </cofactor>
    <text>Binds 1 zinc ion.</text>
</comment>
<organism>
    <name type="scientific">Sulfuracidifex metallicus</name>
    <name type="common">Sulfolobus metallicus</name>
    <dbReference type="NCBI Taxonomy" id="47303"/>
    <lineage>
        <taxon>Archaea</taxon>
        <taxon>Thermoproteota</taxon>
        <taxon>Thermoprotei</taxon>
        <taxon>Sulfolobales</taxon>
        <taxon>Sulfolobaceae</taxon>
        <taxon>Sulfuracidifex</taxon>
    </lineage>
</organism>
<dbReference type="SMR" id="P81543"/>
<dbReference type="GO" id="GO:0051538">
    <property type="term" value="F:3 iron, 4 sulfur cluster binding"/>
    <property type="evidence" value="ECO:0007669"/>
    <property type="project" value="UniProtKB-KW"/>
</dbReference>
<dbReference type="GO" id="GO:0051539">
    <property type="term" value="F:4 iron, 4 sulfur cluster binding"/>
    <property type="evidence" value="ECO:0007669"/>
    <property type="project" value="UniProtKB-KW"/>
</dbReference>
<dbReference type="GO" id="GO:0046872">
    <property type="term" value="F:metal ion binding"/>
    <property type="evidence" value="ECO:0007669"/>
    <property type="project" value="UniProtKB-KW"/>
</dbReference>
<dbReference type="Gene3D" id="3.30.70.20">
    <property type="match status" value="1"/>
</dbReference>
<sequence length="54" mass="5689">GIDPNYRTSRPEVGTHEGHKVYGPVENPKVLGIHGAIVGVDFDLCIADGSCINA</sequence>
<proteinExistence type="evidence at protein level"/>